<reference evidence="9" key="1">
    <citation type="journal article" date="2011" name="J. Bacteriol.">
        <title>Genome sequence of Neisseria meningitidis serogroup B strain H44/76.</title>
        <authorList>
            <person name="Piet J.R."/>
            <person name="Huis In 't Veld R.A."/>
            <person name="van Schaik B.D."/>
            <person name="van Kampen A.H."/>
            <person name="Baas F."/>
            <person name="van de Beek D."/>
            <person name="Pannekoek Y."/>
            <person name="van der Ende A."/>
        </authorList>
    </citation>
    <scope>NUCLEOTIDE SEQUENCE [LARGE SCALE GENOMIC DNA]</scope>
    <source>
        <strain>H44/76</strain>
    </source>
</reference>
<reference key="2">
    <citation type="journal article" date="2013" name="Mol. Microbiol.">
        <title>Involvement of three meningococcal surface-exposed proteins, the heparin-binding protein NhbA, the alpha-peptide of IgA protease and the autotransporter protease NalP, in initiation of biofilm formation.</title>
        <authorList>
            <person name="Arenas J."/>
            <person name="Nijland R."/>
            <person name="Rodriguez F.J."/>
            <person name="Bosma T.N."/>
            <person name="Tommassen J."/>
        </authorList>
    </citation>
    <scope>FUNCTION IN BIOFILM FORMATION</scope>
    <scope>DISRUPTION PHENOTYPE</scope>
    <scope>DNA-BINDING</scope>
    <source>
        <strain>H44/76</strain>
    </source>
</reference>
<feature type="signal peptide" evidence="3">
    <location>
        <begin position="1"/>
        <end position="22"/>
    </location>
</feature>
<feature type="chain" id="PRO_5003208465" description="Neisserial heparin binding antigen" evidence="3">
    <location>
        <begin position="23"/>
        <end position="493"/>
    </location>
</feature>
<feature type="chain" id="PRO_0000456790" description="C2 fragment">
    <location>
        <begin position="298"/>
        <end position="493"/>
    </location>
</feature>
<feature type="region of interest" description="Disordered" evidence="4">
    <location>
        <begin position="27"/>
        <end position="206"/>
    </location>
</feature>
<feature type="short sequence motif" description="Arg-rich motif" evidence="1">
    <location>
        <begin position="301"/>
        <end position="311"/>
    </location>
</feature>
<feature type="compositionally biased region" description="Basic and acidic residues" evidence="4">
    <location>
        <begin position="48"/>
        <end position="58"/>
    </location>
</feature>
<feature type="compositionally biased region" description="Low complexity" evidence="4">
    <location>
        <begin position="59"/>
        <end position="75"/>
    </location>
</feature>
<feature type="compositionally biased region" description="Polar residues" evidence="4">
    <location>
        <begin position="106"/>
        <end position="123"/>
    </location>
</feature>
<feature type="compositionally biased region" description="Polar residues" evidence="4">
    <location>
        <begin position="132"/>
        <end position="147"/>
    </location>
</feature>
<feature type="compositionally biased region" description="Low complexity" evidence="4">
    <location>
        <begin position="165"/>
        <end position="188"/>
    </location>
</feature>
<feature type="site" description="Cleavage by NalP" evidence="1">
    <location>
        <begin position="297"/>
        <end position="298"/>
    </location>
</feature>
<feature type="site" description="Cleavage by human kallikrein-1" evidence="1">
    <location>
        <begin position="308"/>
        <end position="309"/>
    </location>
</feature>
<feature type="site" description="Cleavage by human lactoferrin" evidence="1">
    <location>
        <begin position="310"/>
        <end position="311"/>
    </location>
</feature>
<feature type="lipid moiety-binding region" description="N-palmitoyl cysteine" evidence="3">
    <location>
        <position position="23"/>
    </location>
</feature>
<feature type="lipid moiety-binding region" description="S-diacylglycerol cysteine" evidence="3">
    <location>
        <position position="23"/>
    </location>
</feature>
<comment type="function">
    <text evidence="1 5">A major human immunogenic protein detected in patients recovering from meningitidis, where it induces bactericidal antibodies (By similarity). Binds human cells, heparin and heparan sulfate proteoglycan in vitro via the Arg-rich motif. Heparin-binding to this protein protects bacteria against killing by bactericidal antibodies (serum killing). The bacteria binds a number of human extracellular sialyated and/or sulfated glycans via this protein, including chondroitin sulfate, heparin and ganglioside GT3 (By similarity). Whole protein binds DNA (PubMed:23163582).</text>
</comment>
<comment type="function">
    <text evidence="5 8">Plays a role in extracellular-DNA (eDNA) mediated biofilm formation. In some strains (including cc32 strain H44/76 but not cc11 strain B16B6) eDNA stimulates biofilm formation. When NHBA is not processed by NalP, biofilm formation increases (PubMed:23163582). This is probably because the number of positively charged, NHBA- and IgA-derived DNA-binding peptides on the cell surface rises, resulting in increased DNA-binding peptides and increased biofilm formation (Probable).</text>
</comment>
<comment type="subunit">
    <text evidence="2">The C-terminal beta-barrel forms a monomer.</text>
</comment>
<comment type="subcellular location">
    <subcellularLocation>
        <location evidence="7">Cell outer membrane</location>
        <topology evidence="3">Lipid-anchor</topology>
    </subcellularLocation>
</comment>
<comment type="domain">
    <text evidence="2">The C-terminus forms a beta-barrel with 8 anti-parallel strands.</text>
</comment>
<comment type="PTM">
    <text evidence="1">Cleaved in vivo by the Neisserial phase-variable autotransporter/serine protease NalP to give 2 fragments. The N-terminus remains in the cell outer membrane while the C-terminus (beginning on Ser-298) is soluble; this soluble fragment is called C2. Cleaved in vitro by human lactoferrin (LTF, between Arg-310 and Ser-311), this fragment is called C1. Recombinant and cell surface protein is cleaved by human saliva kallikrein (KLK1) between Ser-308 and Arg-309; in saliva kallikrein is more active on NHBA than lactoferrin. Human plasma kallikrein (KLKB1) cleaves in a similar manner to KLK1.</text>
</comment>
<comment type="disruption phenotype">
    <text evidence="5">Decreased biofilm formation under static and flow growth conditions.</text>
</comment>
<comment type="biotechnology">
    <text evidence="1">A good vaccine protein, it induces bactericidal antibodies in humans.</text>
</comment>
<comment type="similarity">
    <text evidence="7">Belongs to the NHBA family.</text>
</comment>
<comment type="online information" name="Bexsero meningococcal group B Vaccine (4CMenB)">
    <link uri="https://www.ema.europa.eu/en/medicines/human/EPAR/bexsero"/>
</comment>
<proteinExistence type="evidence at protein level"/>
<gene>
    <name evidence="6" type="primary">nhba</name>
    <name evidence="9" type="ORF">NMH_2136</name>
</gene>
<keyword id="KW-0130">Cell adhesion</keyword>
<keyword id="KW-0998">Cell outer membrane</keyword>
<keyword id="KW-0238">DNA-binding</keyword>
<keyword id="KW-0358">Heparin-binding</keyword>
<keyword id="KW-0449">Lipoprotein</keyword>
<keyword id="KW-0472">Membrane</keyword>
<keyword id="KW-0564">Palmitate</keyword>
<keyword id="KW-0732">Signal</keyword>
<keyword id="KW-0843">Virulence</keyword>
<protein>
    <recommendedName>
        <fullName evidence="6">Neisserial heparin binding antigen</fullName>
        <shortName evidence="6">NHBA</shortName>
    </recommendedName>
    <alternativeName>
        <fullName evidence="6">Genome-derived Neisseria antigen 2132</fullName>
        <shortName evidence="6">GNA2132</shortName>
    </alternativeName>
    <component>
        <recommendedName>
            <fullName evidence="1">C2 fragment</fullName>
        </recommendedName>
    </component>
</protein>
<evidence type="ECO:0000250" key="1">
    <source>
        <dbReference type="UniProtKB" id="Q7DD37"/>
    </source>
</evidence>
<evidence type="ECO:0000250" key="2">
    <source>
        <dbReference type="UniProtKB" id="Q9JPP1"/>
    </source>
</evidence>
<evidence type="ECO:0000255" key="3">
    <source>
        <dbReference type="PROSITE-ProRule" id="PRU00303"/>
    </source>
</evidence>
<evidence type="ECO:0000256" key="4">
    <source>
        <dbReference type="SAM" id="MobiDB-lite"/>
    </source>
</evidence>
<evidence type="ECO:0000269" key="5">
    <source>
    </source>
</evidence>
<evidence type="ECO:0000303" key="6">
    <source>
    </source>
</evidence>
<evidence type="ECO:0000305" key="7"/>
<evidence type="ECO:0000305" key="8">
    <source>
    </source>
</evidence>
<evidence type="ECO:0000312" key="9">
    <source>
        <dbReference type="EMBL" id="EFV62996.1"/>
    </source>
</evidence>
<name>NHBA_NEIMH</name>
<sequence>MKEMMMFKRSVIAMACIFALSACGGGGGGSPDVKSADTLSKPAAPVVSEKETEAKEDAPQAGSQGQGAPSAQGSQDMAAVSEENTGNGGAVTADNPKNEDEVAQNDMPQNAAGTDSSTPNHTPDPNMLAGNMENQATDAGESSQPANQPDMANAADGMQGDDPSAGGQNAGNTAAQGANQAGNNQAAGSSDPIPASNPAPANGGSNFGRVDLANGVLIDGPSQNITLTHCKGDSCSGNNFLDEEVQLKSEFEKLSDADKISNYKKDGKNDKFVGLVADSVQMKGINQYIIFYKPKPTSFARFRRSARSRRSLPAEMPLIPVNQADTLIVDGEAVSLTGHSGNIFAPEGNYRYLTYGAEKLPGGSYALRVQGEPAKGEMLAGAAVYNGEVLHFHTENGRPYPTRGRFAAKVDFGSKSVDGIIDSGDDLHMGTQKFKAAIDGNGFKGTWTENGSGDVSGKFYGPAGEEVAGKYSYRPTDAEKGGFGVFAGKKEQD</sequence>
<dbReference type="EMBL" id="AEQZ01000043">
    <property type="protein sequence ID" value="EFV62996.1"/>
    <property type="molecule type" value="Genomic_DNA"/>
</dbReference>
<dbReference type="SMR" id="E6MZW7"/>
<dbReference type="PATRIC" id="fig|909420.4.peg.2364"/>
<dbReference type="Proteomes" id="UP000032707">
    <property type="component" value="Unassembled WGS sequence"/>
</dbReference>
<dbReference type="GO" id="GO:0009279">
    <property type="term" value="C:cell outer membrane"/>
    <property type="evidence" value="ECO:0007669"/>
    <property type="project" value="UniProtKB-SubCell"/>
</dbReference>
<dbReference type="GO" id="GO:0003677">
    <property type="term" value="F:DNA binding"/>
    <property type="evidence" value="ECO:0007669"/>
    <property type="project" value="UniProtKB-KW"/>
</dbReference>
<dbReference type="GO" id="GO:0008201">
    <property type="term" value="F:heparin binding"/>
    <property type="evidence" value="ECO:0007669"/>
    <property type="project" value="UniProtKB-KW"/>
</dbReference>
<dbReference type="GO" id="GO:0007155">
    <property type="term" value="P:cell adhesion"/>
    <property type="evidence" value="ECO:0007669"/>
    <property type="project" value="UniProtKB-KW"/>
</dbReference>
<dbReference type="Gene3D" id="2.40.160.90">
    <property type="match status" value="1"/>
</dbReference>
<dbReference type="Gene3D" id="6.20.50.70">
    <property type="match status" value="1"/>
</dbReference>
<dbReference type="InterPro" id="IPR011250">
    <property type="entry name" value="OMP/PagP_b-brl"/>
</dbReference>
<dbReference type="InterPro" id="IPR001677">
    <property type="entry name" value="TbpB_B_D"/>
</dbReference>
<dbReference type="Pfam" id="PF01298">
    <property type="entry name" value="TbpB_B_D"/>
    <property type="match status" value="1"/>
</dbReference>
<dbReference type="SUPFAM" id="SSF56925">
    <property type="entry name" value="OMPA-like"/>
    <property type="match status" value="1"/>
</dbReference>
<dbReference type="PROSITE" id="PS51257">
    <property type="entry name" value="PROKAR_LIPOPROTEIN"/>
    <property type="match status" value="1"/>
</dbReference>
<accession>E6MZW7</accession>
<organism>
    <name type="scientific">Neisseria meningitidis serogroup B / serotype 15 (strain H44/76)</name>
    <dbReference type="NCBI Taxonomy" id="909420"/>
    <lineage>
        <taxon>Bacteria</taxon>
        <taxon>Pseudomonadati</taxon>
        <taxon>Pseudomonadota</taxon>
        <taxon>Betaproteobacteria</taxon>
        <taxon>Neisseriales</taxon>
        <taxon>Neisseriaceae</taxon>
        <taxon>Neisseria</taxon>
    </lineage>
</organism>